<name>IT2_PSOTE</name>
<dbReference type="PIR" id="A37211">
    <property type="entry name" value="A37211"/>
</dbReference>
<dbReference type="SMR" id="P25700"/>
<dbReference type="MEROPS" id="I03.011"/>
<dbReference type="GO" id="GO:0004867">
    <property type="term" value="F:serine-type endopeptidase inhibitor activity"/>
    <property type="evidence" value="ECO:0007669"/>
    <property type="project" value="UniProtKB-KW"/>
</dbReference>
<dbReference type="CDD" id="cd23362">
    <property type="entry name" value="beta-trefoil_STI_WCI3-like"/>
    <property type="match status" value="1"/>
</dbReference>
<dbReference type="Gene3D" id="2.80.10.50">
    <property type="match status" value="1"/>
</dbReference>
<dbReference type="InterPro" id="IPR011065">
    <property type="entry name" value="Kunitz_inhibitor_STI-like_sf"/>
</dbReference>
<dbReference type="InterPro" id="IPR002160">
    <property type="entry name" value="Prot_inh_Kunz-lg"/>
</dbReference>
<dbReference type="PANTHER" id="PTHR33107">
    <property type="entry name" value="KUNITZ TRYPSIN INHIBITOR 2"/>
    <property type="match status" value="1"/>
</dbReference>
<dbReference type="PANTHER" id="PTHR33107:SF81">
    <property type="entry name" value="TRYPSIN INHIBITOR A"/>
    <property type="match status" value="1"/>
</dbReference>
<dbReference type="Pfam" id="PF00197">
    <property type="entry name" value="Kunitz_legume"/>
    <property type="match status" value="1"/>
</dbReference>
<dbReference type="PRINTS" id="PR00291">
    <property type="entry name" value="KUNITZINHBTR"/>
</dbReference>
<dbReference type="SMART" id="SM00452">
    <property type="entry name" value="STI"/>
    <property type="match status" value="1"/>
</dbReference>
<dbReference type="SUPFAM" id="SSF50386">
    <property type="entry name" value="STI-like"/>
    <property type="match status" value="1"/>
</dbReference>
<dbReference type="PROSITE" id="PS00283">
    <property type="entry name" value="SOYBEAN_KUNITZ"/>
    <property type="match status" value="1"/>
</dbReference>
<sequence length="182" mass="20394">QELVDVEGKTVRNGGTYYLVPQLRPGGGGMEAAKVGNEDCPLTVVKSLDENSNGEPIRIASRLRSTFIPEYSLVNLGFADPPKCAPSPFWTVVKDQSERLPSIKLGEYKDSELDYPFKFERVYAASKMYAYKLLYCGSEDEEEEMMCKDIGVYRDQEGYQRLVVSKHNPLVVGFKKAESSTT</sequence>
<protein>
    <recommendedName>
        <fullName>Trypsin inhibitor 2</fullName>
    </recommendedName>
    <alternativeName>
        <fullName>WTI-2</fullName>
    </alternativeName>
</protein>
<keyword id="KW-0903">Direct protein sequencing</keyword>
<keyword id="KW-1015">Disulfide bond</keyword>
<keyword id="KW-0646">Protease inhibitor</keyword>
<keyword id="KW-0873">Pyrrolidone carboxylic acid</keyword>
<keyword id="KW-0722">Serine protease inhibitor</keyword>
<accession>P25700</accession>
<comment type="similarity">
    <text evidence="3">Belongs to the protease inhibitor I3 (leguminous Kunitz-type inhibitor) family.</text>
</comment>
<reference key="1">
    <citation type="journal article" date="1990" name="J. Protein Chem.">
        <title>Amino acid sequence of the acidic Kunitz-type trypsin inhibitor from winged-bean seed [Psophocarpus tetragonolobus (L.) DC].</title>
        <authorList>
            <person name="Caldwell J.B."/>
            <person name="Strike P.M."/>
            <person name="Kortt A.A."/>
        </authorList>
    </citation>
    <scope>PROTEIN SEQUENCE</scope>
    <scope>PYROGLUTAMATE FORMATION AT GLN-1</scope>
    <source>
        <tissue>Seed</tissue>
    </source>
</reference>
<feature type="chain" id="PRO_0000083304" description="Trypsin inhibitor 2">
    <location>
        <begin position="1"/>
        <end position="182"/>
    </location>
</feature>
<feature type="site" description="Reactive bond for trypsin">
    <location>
        <begin position="64"/>
        <end position="65"/>
    </location>
</feature>
<feature type="modified residue" description="Pyrrolidone carboxylic acid" evidence="2">
    <location>
        <position position="1"/>
    </location>
</feature>
<feature type="disulfide bond" evidence="1">
    <location>
        <begin position="40"/>
        <end position="84"/>
    </location>
</feature>
<feature type="disulfide bond" evidence="1">
    <location>
        <begin position="136"/>
        <end position="147"/>
    </location>
</feature>
<proteinExistence type="evidence at protein level"/>
<evidence type="ECO:0000250" key="1"/>
<evidence type="ECO:0000269" key="2">
    <source>
    </source>
</evidence>
<evidence type="ECO:0000305" key="3"/>
<organism>
    <name type="scientific">Psophocarpus tetragonolobus</name>
    <name type="common">Winged bean</name>
    <name type="synonym">Dolichos tetragonolobus</name>
    <dbReference type="NCBI Taxonomy" id="3891"/>
    <lineage>
        <taxon>Eukaryota</taxon>
        <taxon>Viridiplantae</taxon>
        <taxon>Streptophyta</taxon>
        <taxon>Embryophyta</taxon>
        <taxon>Tracheophyta</taxon>
        <taxon>Spermatophyta</taxon>
        <taxon>Magnoliopsida</taxon>
        <taxon>eudicotyledons</taxon>
        <taxon>Gunneridae</taxon>
        <taxon>Pentapetalae</taxon>
        <taxon>rosids</taxon>
        <taxon>fabids</taxon>
        <taxon>Fabales</taxon>
        <taxon>Fabaceae</taxon>
        <taxon>Papilionoideae</taxon>
        <taxon>50 kb inversion clade</taxon>
        <taxon>NPAAA clade</taxon>
        <taxon>indigoferoid/millettioid clade</taxon>
        <taxon>Phaseoleae</taxon>
        <taxon>Psophocarpus</taxon>
    </lineage>
</organism>